<organism>
    <name type="scientific">Helicobacter pylori (strain ATCC 700392 / 26695)</name>
    <name type="common">Campylobacter pylori</name>
    <dbReference type="NCBI Taxonomy" id="85962"/>
    <lineage>
        <taxon>Bacteria</taxon>
        <taxon>Pseudomonadati</taxon>
        <taxon>Campylobacterota</taxon>
        <taxon>Epsilonproteobacteria</taxon>
        <taxon>Campylobacterales</taxon>
        <taxon>Helicobacteraceae</taxon>
        <taxon>Helicobacter</taxon>
    </lineage>
</organism>
<gene>
    <name evidence="1" type="primary">fabZ</name>
    <name type="ordered locus">HP_1376</name>
</gene>
<evidence type="ECO:0000255" key="1">
    <source>
        <dbReference type="HAMAP-Rule" id="MF_00406"/>
    </source>
</evidence>
<evidence type="ECO:0007829" key="2">
    <source>
        <dbReference type="PDB" id="2GLL"/>
    </source>
</evidence>
<sequence length="159" mass="18196">MEQSHQNLQSQFFIEHILQILPHRYPMLLVDRIIELQANKKIVAYKNITFNEDVFNGHFPNKPIFPGVLIVEGMAQTGGFLAFTSLWGFDPEIAKTKIVYFMTIDKVKFRIPVTPGDRLEYHLEVLKHKGMIWQVGGTAQVDGKVVAEAELKAMIAERD</sequence>
<dbReference type="EC" id="4.2.1.59" evidence="1"/>
<dbReference type="EMBL" id="AE000511">
    <property type="protein sequence ID" value="AAD08419.1"/>
    <property type="molecule type" value="Genomic_DNA"/>
</dbReference>
<dbReference type="PIR" id="H64691">
    <property type="entry name" value="H64691"/>
</dbReference>
<dbReference type="RefSeq" id="NP_208167.1">
    <property type="nucleotide sequence ID" value="NC_000915.1"/>
</dbReference>
<dbReference type="RefSeq" id="WP_000438056.1">
    <property type="nucleotide sequence ID" value="NC_018939.1"/>
</dbReference>
<dbReference type="PDB" id="2GLL">
    <property type="method" value="X-ray"/>
    <property type="resolution" value="2.20 A"/>
    <property type="chains" value="A/B/C/D/E/F=1-158"/>
</dbReference>
<dbReference type="PDB" id="2GLM">
    <property type="method" value="X-ray"/>
    <property type="resolution" value="2.60 A"/>
    <property type="chains" value="A/B/C/D/E/F=1-158"/>
</dbReference>
<dbReference type="PDB" id="2GLP">
    <property type="method" value="X-ray"/>
    <property type="resolution" value="2.42 A"/>
    <property type="chains" value="A/B/C/D/E/F=1-158"/>
</dbReference>
<dbReference type="PDB" id="2GLV">
    <property type="method" value="X-ray"/>
    <property type="resolution" value="2.50 A"/>
    <property type="chains" value="A/B/C/D/E/F/G/H/I/J/K/L=1-158"/>
</dbReference>
<dbReference type="PDBsum" id="2GLL"/>
<dbReference type="PDBsum" id="2GLM"/>
<dbReference type="PDBsum" id="2GLP"/>
<dbReference type="PDBsum" id="2GLV"/>
<dbReference type="SMR" id="O25928"/>
<dbReference type="FunCoup" id="O25928">
    <property type="interactions" value="337"/>
</dbReference>
<dbReference type="IntAct" id="O25928">
    <property type="interactions" value="1"/>
</dbReference>
<dbReference type="STRING" id="85962.HP_1376"/>
<dbReference type="BindingDB" id="O25928"/>
<dbReference type="DrugBank" id="DB07445">
    <property type="generic name" value="N'-[(1E)-(3,5-DIBROMO-2,4-DIHYDROXYPHENYL)METHYLENE]NICOTINOHYDRAZIDE"/>
</dbReference>
<dbReference type="PaxDb" id="85962-C694_07100"/>
<dbReference type="EnsemblBacteria" id="AAD08419">
    <property type="protein sequence ID" value="AAD08419"/>
    <property type="gene ID" value="HP_1376"/>
</dbReference>
<dbReference type="KEGG" id="heo:C694_07100"/>
<dbReference type="KEGG" id="hpy:HP_1376"/>
<dbReference type="PATRIC" id="fig|85962.47.peg.1473"/>
<dbReference type="eggNOG" id="COG0764">
    <property type="taxonomic scope" value="Bacteria"/>
</dbReference>
<dbReference type="InParanoid" id="O25928"/>
<dbReference type="OrthoDB" id="9772788at2"/>
<dbReference type="PhylomeDB" id="O25928"/>
<dbReference type="EvolutionaryTrace" id="O25928"/>
<dbReference type="PRO" id="PR:O25928"/>
<dbReference type="Proteomes" id="UP000000429">
    <property type="component" value="Chromosome"/>
</dbReference>
<dbReference type="GO" id="GO:0005737">
    <property type="term" value="C:cytoplasm"/>
    <property type="evidence" value="ECO:0007669"/>
    <property type="project" value="UniProtKB-SubCell"/>
</dbReference>
<dbReference type="GO" id="GO:0016020">
    <property type="term" value="C:membrane"/>
    <property type="evidence" value="ECO:0007669"/>
    <property type="project" value="GOC"/>
</dbReference>
<dbReference type="GO" id="GO:0019171">
    <property type="term" value="F:(3R)-hydroxyacyl-[acyl-carrier-protein] dehydratase activity"/>
    <property type="evidence" value="ECO:0007669"/>
    <property type="project" value="UniProtKB-EC"/>
</dbReference>
<dbReference type="GO" id="GO:0006633">
    <property type="term" value="P:fatty acid biosynthetic process"/>
    <property type="evidence" value="ECO:0007669"/>
    <property type="project" value="UniProtKB-UniRule"/>
</dbReference>
<dbReference type="GO" id="GO:0009245">
    <property type="term" value="P:lipid A biosynthetic process"/>
    <property type="evidence" value="ECO:0007669"/>
    <property type="project" value="UniProtKB-UniRule"/>
</dbReference>
<dbReference type="CDD" id="cd01288">
    <property type="entry name" value="FabZ"/>
    <property type="match status" value="1"/>
</dbReference>
<dbReference type="FunFam" id="3.10.129.10:FF:000001">
    <property type="entry name" value="3-hydroxyacyl-[acyl-carrier-protein] dehydratase FabZ"/>
    <property type="match status" value="1"/>
</dbReference>
<dbReference type="Gene3D" id="3.10.129.10">
    <property type="entry name" value="Hotdog Thioesterase"/>
    <property type="match status" value="1"/>
</dbReference>
<dbReference type="HAMAP" id="MF_00406">
    <property type="entry name" value="FabZ"/>
    <property type="match status" value="1"/>
</dbReference>
<dbReference type="InterPro" id="IPR013114">
    <property type="entry name" value="FabA_FabZ"/>
</dbReference>
<dbReference type="InterPro" id="IPR010084">
    <property type="entry name" value="FabZ"/>
</dbReference>
<dbReference type="InterPro" id="IPR029069">
    <property type="entry name" value="HotDog_dom_sf"/>
</dbReference>
<dbReference type="NCBIfam" id="TIGR01750">
    <property type="entry name" value="fabZ"/>
    <property type="match status" value="1"/>
</dbReference>
<dbReference type="NCBIfam" id="NF000582">
    <property type="entry name" value="PRK00006.1"/>
    <property type="match status" value="1"/>
</dbReference>
<dbReference type="PANTHER" id="PTHR30272">
    <property type="entry name" value="3-HYDROXYACYL-[ACYL-CARRIER-PROTEIN] DEHYDRATASE"/>
    <property type="match status" value="1"/>
</dbReference>
<dbReference type="PANTHER" id="PTHR30272:SF1">
    <property type="entry name" value="3-HYDROXYACYL-[ACYL-CARRIER-PROTEIN] DEHYDRATASE"/>
    <property type="match status" value="1"/>
</dbReference>
<dbReference type="Pfam" id="PF07977">
    <property type="entry name" value="FabA"/>
    <property type="match status" value="1"/>
</dbReference>
<dbReference type="SUPFAM" id="SSF54637">
    <property type="entry name" value="Thioesterase/thiol ester dehydrase-isomerase"/>
    <property type="match status" value="1"/>
</dbReference>
<feature type="chain" id="PRO_0000091688" description="3-hydroxyacyl-[acyl-carrier-protein] dehydratase FabZ">
    <location>
        <begin position="1"/>
        <end position="159"/>
    </location>
</feature>
<feature type="active site" evidence="1">
    <location>
        <position position="58"/>
    </location>
</feature>
<feature type="helix" evidence="2">
    <location>
        <begin position="14"/>
        <end position="20"/>
    </location>
</feature>
<feature type="strand" evidence="2">
    <location>
        <begin position="32"/>
        <end position="37"/>
    </location>
</feature>
<feature type="turn" evidence="2">
    <location>
        <begin position="38"/>
        <end position="40"/>
    </location>
</feature>
<feature type="strand" evidence="2">
    <location>
        <begin position="41"/>
        <end position="47"/>
    </location>
</feature>
<feature type="helix" evidence="2">
    <location>
        <begin position="54"/>
        <end position="57"/>
    </location>
</feature>
<feature type="helix" evidence="2">
    <location>
        <begin position="67"/>
        <end position="87"/>
    </location>
</feature>
<feature type="helix" evidence="2">
    <location>
        <begin position="91"/>
        <end position="94"/>
    </location>
</feature>
<feature type="strand" evidence="2">
    <location>
        <begin position="97"/>
        <end position="109"/>
    </location>
</feature>
<feature type="strand" evidence="2">
    <location>
        <begin position="118"/>
        <end position="141"/>
    </location>
</feature>
<feature type="strand" evidence="2">
    <location>
        <begin position="144"/>
        <end position="157"/>
    </location>
</feature>
<keyword id="KW-0002">3D-structure</keyword>
<keyword id="KW-0963">Cytoplasm</keyword>
<keyword id="KW-0441">Lipid A biosynthesis</keyword>
<keyword id="KW-0444">Lipid biosynthesis</keyword>
<keyword id="KW-0443">Lipid metabolism</keyword>
<keyword id="KW-0456">Lyase</keyword>
<keyword id="KW-1185">Reference proteome</keyword>
<reference key="1">
    <citation type="journal article" date="1997" name="Nature">
        <title>The complete genome sequence of the gastric pathogen Helicobacter pylori.</title>
        <authorList>
            <person name="Tomb J.-F."/>
            <person name="White O."/>
            <person name="Kerlavage A.R."/>
            <person name="Clayton R.A."/>
            <person name="Sutton G.G."/>
            <person name="Fleischmann R.D."/>
            <person name="Ketchum K.A."/>
            <person name="Klenk H.-P."/>
            <person name="Gill S.R."/>
            <person name="Dougherty B.A."/>
            <person name="Nelson K.E."/>
            <person name="Quackenbush J."/>
            <person name="Zhou L."/>
            <person name="Kirkness E.F."/>
            <person name="Peterson S.N."/>
            <person name="Loftus B.J."/>
            <person name="Richardson D.L."/>
            <person name="Dodson R.J."/>
            <person name="Khalak H.G."/>
            <person name="Glodek A."/>
            <person name="McKenney K."/>
            <person name="FitzGerald L.M."/>
            <person name="Lee N."/>
            <person name="Adams M.D."/>
            <person name="Hickey E.K."/>
            <person name="Berg D.E."/>
            <person name="Gocayne J.D."/>
            <person name="Utterback T.R."/>
            <person name="Peterson J.D."/>
            <person name="Kelley J.M."/>
            <person name="Cotton M.D."/>
            <person name="Weidman J.F."/>
            <person name="Fujii C."/>
            <person name="Bowman C."/>
            <person name="Watthey L."/>
            <person name="Wallin E."/>
            <person name="Hayes W.S."/>
            <person name="Borodovsky M."/>
            <person name="Karp P.D."/>
            <person name="Smith H.O."/>
            <person name="Fraser C.M."/>
            <person name="Venter J.C."/>
        </authorList>
    </citation>
    <scope>NUCLEOTIDE SEQUENCE [LARGE SCALE GENOMIC DNA]</scope>
    <source>
        <strain>ATCC 700392 / 26695</strain>
    </source>
</reference>
<proteinExistence type="evidence at protein level"/>
<name>FABZ_HELPY</name>
<protein>
    <recommendedName>
        <fullName evidence="1">3-hydroxyacyl-[acyl-carrier-protein] dehydratase FabZ</fullName>
        <ecNumber evidence="1">4.2.1.59</ecNumber>
    </recommendedName>
    <alternativeName>
        <fullName evidence="1">(3R)-hydroxymyristoyl-[acyl-carrier-protein] dehydratase</fullName>
        <shortName evidence="1">(3R)-hydroxymyristoyl-ACP dehydrase</shortName>
    </alternativeName>
    <alternativeName>
        <fullName evidence="1">Beta-hydroxyacyl-ACP dehydratase</fullName>
    </alternativeName>
</protein>
<comment type="function">
    <text evidence="1">Involved in unsaturated fatty acids biosynthesis. Catalyzes the dehydration of short chain beta-hydroxyacyl-ACPs and long chain saturated and unsaturated beta-hydroxyacyl-ACPs.</text>
</comment>
<comment type="catalytic activity">
    <reaction evidence="1">
        <text>a (3R)-hydroxyacyl-[ACP] = a (2E)-enoyl-[ACP] + H2O</text>
        <dbReference type="Rhea" id="RHEA:13097"/>
        <dbReference type="Rhea" id="RHEA-COMP:9925"/>
        <dbReference type="Rhea" id="RHEA-COMP:9945"/>
        <dbReference type="ChEBI" id="CHEBI:15377"/>
        <dbReference type="ChEBI" id="CHEBI:78784"/>
        <dbReference type="ChEBI" id="CHEBI:78827"/>
        <dbReference type="EC" id="4.2.1.59"/>
    </reaction>
</comment>
<comment type="subcellular location">
    <subcellularLocation>
        <location evidence="1">Cytoplasm</location>
    </subcellularLocation>
</comment>
<comment type="similarity">
    <text evidence="1">Belongs to the thioester dehydratase family. FabZ subfamily.</text>
</comment>
<accession>O25928</accession>